<evidence type="ECO:0000250" key="1"/>
<evidence type="ECO:0000255" key="2"/>
<evidence type="ECO:0000255" key="3">
    <source>
        <dbReference type="PROSITE-ProRule" id="PRU10095"/>
    </source>
</evidence>
<evidence type="ECO:0000305" key="4"/>
<name>PMIP_DEBHA</name>
<organism>
    <name type="scientific">Debaryomyces hansenii (strain ATCC 36239 / CBS 767 / BCRC 21394 / JCM 1990 / NBRC 0083 / IGC 2968)</name>
    <name type="common">Yeast</name>
    <name type="synonym">Torulaspora hansenii</name>
    <dbReference type="NCBI Taxonomy" id="284592"/>
    <lineage>
        <taxon>Eukaryota</taxon>
        <taxon>Fungi</taxon>
        <taxon>Dikarya</taxon>
        <taxon>Ascomycota</taxon>
        <taxon>Saccharomycotina</taxon>
        <taxon>Pichiomycetes</taxon>
        <taxon>Debaryomycetaceae</taxon>
        <taxon>Debaryomyces</taxon>
    </lineage>
</organism>
<feature type="transit peptide" description="Mitochondrion" evidence="2">
    <location>
        <begin position="1"/>
        <end position="39"/>
    </location>
</feature>
<feature type="chain" id="PRO_0000338583" description="Mitochondrial intermediate peptidase">
    <location>
        <begin position="40"/>
        <end position="794"/>
    </location>
</feature>
<feature type="active site" evidence="3">
    <location>
        <position position="582"/>
    </location>
</feature>
<feature type="binding site" evidence="3">
    <location>
        <position position="581"/>
    </location>
    <ligand>
        <name>Zn(2+)</name>
        <dbReference type="ChEBI" id="CHEBI:29105"/>
        <note>catalytic</note>
    </ligand>
</feature>
<feature type="binding site" evidence="3">
    <location>
        <position position="585"/>
    </location>
    <ligand>
        <name>Zn(2+)</name>
        <dbReference type="ChEBI" id="CHEBI:29105"/>
        <note>catalytic</note>
    </ligand>
</feature>
<feature type="binding site" evidence="3">
    <location>
        <position position="588"/>
    </location>
    <ligand>
        <name>Zn(2+)</name>
        <dbReference type="ChEBI" id="CHEBI:29105"/>
        <note>catalytic</note>
    </ligand>
</feature>
<keyword id="KW-0378">Hydrolase</keyword>
<keyword id="KW-0479">Metal-binding</keyword>
<keyword id="KW-0482">Metalloprotease</keyword>
<keyword id="KW-0496">Mitochondrion</keyword>
<keyword id="KW-0645">Protease</keyword>
<keyword id="KW-1185">Reference proteome</keyword>
<keyword id="KW-0809">Transit peptide</keyword>
<keyword id="KW-0862">Zinc</keyword>
<accession>Q6BJ61</accession>
<proteinExistence type="inferred from homology"/>
<protein>
    <recommendedName>
        <fullName>Mitochondrial intermediate peptidase</fullName>
        <shortName>MIP</shortName>
        <ecNumber>3.4.24.59</ecNumber>
    </recommendedName>
    <alternativeName>
        <fullName>Octapeptidyl aminopeptidase</fullName>
    </alternativeName>
</protein>
<comment type="function">
    <text evidence="1">Cleaves proteins, imported into the mitochondrion, to their mature size. While most mitochondrial precursor proteins are processed to the mature form in one step by mitochondrial processing peptidase (MPP), the sequential cleavage by MIP of an octapeptide after initial processing by MPP is a required step for a subgroup of nuclear-encoded precursor proteins destined for the matrix or the inner membrane (By similarity).</text>
</comment>
<comment type="catalytic activity">
    <reaction>
        <text>Release of an N-terminal octapeptide as second stage of processing of some proteins imported into the mitochondrion.</text>
        <dbReference type="EC" id="3.4.24.59"/>
    </reaction>
</comment>
<comment type="cofactor">
    <cofactor evidence="1">
        <name>Zn(2+)</name>
        <dbReference type="ChEBI" id="CHEBI:29105"/>
    </cofactor>
    <text evidence="1">Binds 1 zinc ion.</text>
</comment>
<comment type="subcellular location">
    <subcellularLocation>
        <location evidence="1">Mitochondrion matrix</location>
    </subcellularLocation>
</comment>
<comment type="similarity">
    <text evidence="4">Belongs to the peptidase M3 family.</text>
</comment>
<dbReference type="EC" id="3.4.24.59"/>
<dbReference type="EMBL" id="CR382139">
    <property type="protein sequence ID" value="CAG90217.2"/>
    <property type="molecule type" value="Genomic_DNA"/>
</dbReference>
<dbReference type="RefSeq" id="XP_461760.2">
    <property type="nucleotide sequence ID" value="XM_461760.1"/>
</dbReference>
<dbReference type="SMR" id="Q6BJ61"/>
<dbReference type="FunCoup" id="Q6BJ61">
    <property type="interactions" value="671"/>
</dbReference>
<dbReference type="STRING" id="284592.Q6BJ61"/>
<dbReference type="GeneID" id="2904636"/>
<dbReference type="KEGG" id="dha:DEHA2G04928g"/>
<dbReference type="VEuPathDB" id="FungiDB:DEHA2G04928g"/>
<dbReference type="eggNOG" id="KOG2090">
    <property type="taxonomic scope" value="Eukaryota"/>
</dbReference>
<dbReference type="HOGENOM" id="CLU_001805_0_0_1"/>
<dbReference type="InParanoid" id="Q6BJ61"/>
<dbReference type="OMA" id="ALMFEYM"/>
<dbReference type="OrthoDB" id="17530at2759"/>
<dbReference type="Proteomes" id="UP000000599">
    <property type="component" value="Chromosome G"/>
</dbReference>
<dbReference type="GO" id="GO:0005759">
    <property type="term" value="C:mitochondrial matrix"/>
    <property type="evidence" value="ECO:0007669"/>
    <property type="project" value="UniProtKB-SubCell"/>
</dbReference>
<dbReference type="GO" id="GO:0046872">
    <property type="term" value="F:metal ion binding"/>
    <property type="evidence" value="ECO:0007669"/>
    <property type="project" value="UniProtKB-KW"/>
</dbReference>
<dbReference type="GO" id="GO:0004222">
    <property type="term" value="F:metalloendopeptidase activity"/>
    <property type="evidence" value="ECO:0007669"/>
    <property type="project" value="UniProtKB-EC"/>
</dbReference>
<dbReference type="GO" id="GO:0006879">
    <property type="term" value="P:intracellular iron ion homeostasis"/>
    <property type="evidence" value="ECO:0007669"/>
    <property type="project" value="EnsemblFungi"/>
</dbReference>
<dbReference type="GO" id="GO:0006518">
    <property type="term" value="P:peptide metabolic process"/>
    <property type="evidence" value="ECO:0007669"/>
    <property type="project" value="TreeGrafter"/>
</dbReference>
<dbReference type="GO" id="GO:0006627">
    <property type="term" value="P:protein processing involved in protein targeting to mitochondrion"/>
    <property type="evidence" value="ECO:0007669"/>
    <property type="project" value="EnsemblFungi"/>
</dbReference>
<dbReference type="GO" id="GO:0050821">
    <property type="term" value="P:protein stabilization"/>
    <property type="evidence" value="ECO:0007669"/>
    <property type="project" value="EnsemblFungi"/>
</dbReference>
<dbReference type="CDD" id="cd06457">
    <property type="entry name" value="M3A_MIP"/>
    <property type="match status" value="1"/>
</dbReference>
<dbReference type="Gene3D" id="3.40.390.10">
    <property type="entry name" value="Collagenase (Catalytic Domain)"/>
    <property type="match status" value="1"/>
</dbReference>
<dbReference type="Gene3D" id="1.10.1370.10">
    <property type="entry name" value="Neurolysin, domain 3"/>
    <property type="match status" value="1"/>
</dbReference>
<dbReference type="InterPro" id="IPR033851">
    <property type="entry name" value="M3A_MIP"/>
</dbReference>
<dbReference type="InterPro" id="IPR024079">
    <property type="entry name" value="MetalloPept_cat_dom_sf"/>
</dbReference>
<dbReference type="InterPro" id="IPR024077">
    <property type="entry name" value="Neurolysin/TOP_dom2"/>
</dbReference>
<dbReference type="InterPro" id="IPR045090">
    <property type="entry name" value="Pept_M3A_M3B"/>
</dbReference>
<dbReference type="InterPro" id="IPR001567">
    <property type="entry name" value="Pept_M3A_M3B_dom"/>
</dbReference>
<dbReference type="PANTHER" id="PTHR11804:SF79">
    <property type="entry name" value="MITOCHONDRIAL INTERMEDIATE PEPTIDASE"/>
    <property type="match status" value="1"/>
</dbReference>
<dbReference type="PANTHER" id="PTHR11804">
    <property type="entry name" value="PROTEASE M3 THIMET OLIGOPEPTIDASE-RELATED"/>
    <property type="match status" value="1"/>
</dbReference>
<dbReference type="Pfam" id="PF01432">
    <property type="entry name" value="Peptidase_M3"/>
    <property type="match status" value="1"/>
</dbReference>
<dbReference type="SUPFAM" id="SSF55486">
    <property type="entry name" value="Metalloproteases ('zincins'), catalytic domain"/>
    <property type="match status" value="1"/>
</dbReference>
<dbReference type="PROSITE" id="PS00142">
    <property type="entry name" value="ZINC_PROTEASE"/>
    <property type="match status" value="1"/>
</dbReference>
<gene>
    <name type="primary">OCT1</name>
    <name type="ordered locus">DEHA2G04928g</name>
</gene>
<reference key="1">
    <citation type="journal article" date="2004" name="Nature">
        <title>Genome evolution in yeasts.</title>
        <authorList>
            <person name="Dujon B."/>
            <person name="Sherman D."/>
            <person name="Fischer G."/>
            <person name="Durrens P."/>
            <person name="Casaregola S."/>
            <person name="Lafontaine I."/>
            <person name="de Montigny J."/>
            <person name="Marck C."/>
            <person name="Neuveglise C."/>
            <person name="Talla E."/>
            <person name="Goffard N."/>
            <person name="Frangeul L."/>
            <person name="Aigle M."/>
            <person name="Anthouard V."/>
            <person name="Babour A."/>
            <person name="Barbe V."/>
            <person name="Barnay S."/>
            <person name="Blanchin S."/>
            <person name="Beckerich J.-M."/>
            <person name="Beyne E."/>
            <person name="Bleykasten C."/>
            <person name="Boisrame A."/>
            <person name="Boyer J."/>
            <person name="Cattolico L."/>
            <person name="Confanioleri F."/>
            <person name="de Daruvar A."/>
            <person name="Despons L."/>
            <person name="Fabre E."/>
            <person name="Fairhead C."/>
            <person name="Ferry-Dumazet H."/>
            <person name="Groppi A."/>
            <person name="Hantraye F."/>
            <person name="Hennequin C."/>
            <person name="Jauniaux N."/>
            <person name="Joyet P."/>
            <person name="Kachouri R."/>
            <person name="Kerrest A."/>
            <person name="Koszul R."/>
            <person name="Lemaire M."/>
            <person name="Lesur I."/>
            <person name="Ma L."/>
            <person name="Muller H."/>
            <person name="Nicaud J.-M."/>
            <person name="Nikolski M."/>
            <person name="Oztas S."/>
            <person name="Ozier-Kalogeropoulos O."/>
            <person name="Pellenz S."/>
            <person name="Potier S."/>
            <person name="Richard G.-F."/>
            <person name="Straub M.-L."/>
            <person name="Suleau A."/>
            <person name="Swennen D."/>
            <person name="Tekaia F."/>
            <person name="Wesolowski-Louvel M."/>
            <person name="Westhof E."/>
            <person name="Wirth B."/>
            <person name="Zeniou-Meyer M."/>
            <person name="Zivanovic Y."/>
            <person name="Bolotin-Fukuhara M."/>
            <person name="Thierry A."/>
            <person name="Bouchier C."/>
            <person name="Caudron B."/>
            <person name="Scarpelli C."/>
            <person name="Gaillardin C."/>
            <person name="Weissenbach J."/>
            <person name="Wincker P."/>
            <person name="Souciet J.-L."/>
        </authorList>
    </citation>
    <scope>NUCLEOTIDE SEQUENCE [LARGE SCALE GENOMIC DNA]</scope>
    <source>
        <strain>ATCC 36239 / CBS 767 / BCRC 21394 / JCM 1990 / NBRC 0083 / IGC 2968</strain>
    </source>
</reference>
<sequence>MRVTSSRLLQGGSLVSRVLKRRLNNASRTKKGWFSTRTLADSNEHLRRVFDDQAYFDNFTKSGAPEGAMNSLFGGNGVGLFRNRALISPQGLVDFSEESLERAKMLVSNMMAEVKTSEQGRLEYIKKLDQLSDVLCRVIDVAEFIRVSHPSQKWVDAAQRTHEIMFEYMNQLNTNVELYESLRDLLIDPAITTKLSKEEIEVGEYLRQDFERSGIHMDPNTRNNFVAITQEISLLGSHFNNDIHSLESYWCNISRSEFDKISDTVVKSEIYGYQSSSPASQNKDSGNIYIPLAGHIPYTILSKCEVESVRRKVWISLHNSPKEQIDTLNAFVKYRALLAKMLGYKSFAHYQLEHKMAKNPENVLTLLRNLQQGLISKEYGVCEEVKKLHSFKNGDDAVMTDEEILEDVKPWDREYLLAQLQSQTLKDEEPLEDISEYFSVGTIVSGLSKLFYSIYNVNLIPEATLKGETWDSNQVRKLNVFDVTSNKKLGYLYLDFWSPKVLPSHFTIVCSRKLNTDIGSESRDEMREMVQLDENEQHQLPVISLVCNLSKPQGTGVGRFTGMDSRKPTLLSLDQVDTIFHEMGHAMHSMIGKTDLHNLSGTRCVTDFVELPSVLMESFSKDPRVLCKIAKHYRTKEPLSKETLAKHQSHRVLLEESETFMQSKMAMLDQVLHNEDIINCGIKDFDSTAVYHHLESQLKVFADKWSTWHGKFPHLFSYGAVYYSYLLDRAIAEKIWHGLFKDDPWSREAGQKYKDSILKWGGTRDPWVCLADALGDERLGKGDSKAMEIIGQKV</sequence>